<dbReference type="EMBL" id="AF076090">
    <property type="protein sequence ID" value="AAC68647.1"/>
    <property type="molecule type" value="Genomic_DNA"/>
</dbReference>
<dbReference type="SMR" id="O79228"/>
<dbReference type="GO" id="GO:0005743">
    <property type="term" value="C:mitochondrial inner membrane"/>
    <property type="evidence" value="ECO:0007669"/>
    <property type="project" value="UniProtKB-SubCell"/>
</dbReference>
<dbReference type="GO" id="GO:0045275">
    <property type="term" value="C:respiratory chain complex III"/>
    <property type="evidence" value="ECO:0007669"/>
    <property type="project" value="InterPro"/>
</dbReference>
<dbReference type="GO" id="GO:0046872">
    <property type="term" value="F:metal ion binding"/>
    <property type="evidence" value="ECO:0007669"/>
    <property type="project" value="UniProtKB-KW"/>
</dbReference>
<dbReference type="GO" id="GO:0008121">
    <property type="term" value="F:ubiquinol-cytochrome-c reductase activity"/>
    <property type="evidence" value="ECO:0007669"/>
    <property type="project" value="InterPro"/>
</dbReference>
<dbReference type="GO" id="GO:0006122">
    <property type="term" value="P:mitochondrial electron transport, ubiquinol to cytochrome c"/>
    <property type="evidence" value="ECO:0007669"/>
    <property type="project" value="TreeGrafter"/>
</dbReference>
<dbReference type="CDD" id="cd00290">
    <property type="entry name" value="cytochrome_b_C"/>
    <property type="match status" value="1"/>
</dbReference>
<dbReference type="CDD" id="cd00284">
    <property type="entry name" value="Cytochrome_b_N"/>
    <property type="match status" value="1"/>
</dbReference>
<dbReference type="FunFam" id="1.20.810.10:FF:000002">
    <property type="entry name" value="Cytochrome b"/>
    <property type="match status" value="1"/>
</dbReference>
<dbReference type="Gene3D" id="1.20.810.10">
    <property type="entry name" value="Cytochrome Bc1 Complex, Chain C"/>
    <property type="match status" value="1"/>
</dbReference>
<dbReference type="InterPro" id="IPR005798">
    <property type="entry name" value="Cyt_b/b6_C"/>
</dbReference>
<dbReference type="InterPro" id="IPR036150">
    <property type="entry name" value="Cyt_b/b6_C_sf"/>
</dbReference>
<dbReference type="InterPro" id="IPR005797">
    <property type="entry name" value="Cyt_b/b6_N"/>
</dbReference>
<dbReference type="InterPro" id="IPR027387">
    <property type="entry name" value="Cytb/b6-like_sf"/>
</dbReference>
<dbReference type="InterPro" id="IPR030689">
    <property type="entry name" value="Cytochrome_b"/>
</dbReference>
<dbReference type="InterPro" id="IPR048260">
    <property type="entry name" value="Cytochrome_b_C_euk/bac"/>
</dbReference>
<dbReference type="InterPro" id="IPR048259">
    <property type="entry name" value="Cytochrome_b_N_euk/bac"/>
</dbReference>
<dbReference type="InterPro" id="IPR016174">
    <property type="entry name" value="Di-haem_cyt_TM"/>
</dbReference>
<dbReference type="PANTHER" id="PTHR19271">
    <property type="entry name" value="CYTOCHROME B"/>
    <property type="match status" value="1"/>
</dbReference>
<dbReference type="PANTHER" id="PTHR19271:SF16">
    <property type="entry name" value="CYTOCHROME B"/>
    <property type="match status" value="1"/>
</dbReference>
<dbReference type="Pfam" id="PF00032">
    <property type="entry name" value="Cytochrom_B_C"/>
    <property type="match status" value="1"/>
</dbReference>
<dbReference type="Pfam" id="PF00033">
    <property type="entry name" value="Cytochrome_B"/>
    <property type="match status" value="1"/>
</dbReference>
<dbReference type="PIRSF" id="PIRSF038885">
    <property type="entry name" value="COB"/>
    <property type="match status" value="1"/>
</dbReference>
<dbReference type="SUPFAM" id="SSF81648">
    <property type="entry name" value="a domain/subunit of cytochrome bc1 complex (Ubiquinol-cytochrome c reductase)"/>
    <property type="match status" value="1"/>
</dbReference>
<dbReference type="SUPFAM" id="SSF81342">
    <property type="entry name" value="Transmembrane di-heme cytochromes"/>
    <property type="match status" value="1"/>
</dbReference>
<dbReference type="PROSITE" id="PS51003">
    <property type="entry name" value="CYTB_CTER"/>
    <property type="match status" value="1"/>
</dbReference>
<dbReference type="PROSITE" id="PS51002">
    <property type="entry name" value="CYTB_NTER"/>
    <property type="match status" value="1"/>
</dbReference>
<gene>
    <name type="primary">MT-CYB</name>
    <name type="synonym">COB</name>
    <name type="synonym">CYTB</name>
    <name type="synonym">MTCYB</name>
</gene>
<evidence type="ECO:0000250" key="1"/>
<evidence type="ECO:0000250" key="2">
    <source>
        <dbReference type="UniProtKB" id="P00157"/>
    </source>
</evidence>
<evidence type="ECO:0000255" key="3">
    <source>
        <dbReference type="PROSITE-ProRule" id="PRU00967"/>
    </source>
</evidence>
<evidence type="ECO:0000255" key="4">
    <source>
        <dbReference type="PROSITE-ProRule" id="PRU00968"/>
    </source>
</evidence>
<geneLocation type="mitochondrion"/>
<name>CYB_PYGPA</name>
<reference key="1">
    <citation type="journal article" date="1998" name="Mol. Biol. Evol.">
        <title>Body size effects and rates of cytochrome-b evolution in tube-nosed seabirds.</title>
        <authorList>
            <person name="Nunn G.B."/>
            <person name="Stanley S.E."/>
        </authorList>
    </citation>
    <scope>NUCLEOTIDE SEQUENCE [GENOMIC DNA]</scope>
    <source>
        <strain>Isolate Pygopap-1</strain>
    </source>
</reference>
<keyword id="KW-0249">Electron transport</keyword>
<keyword id="KW-0349">Heme</keyword>
<keyword id="KW-0408">Iron</keyword>
<keyword id="KW-0472">Membrane</keyword>
<keyword id="KW-0479">Metal-binding</keyword>
<keyword id="KW-0496">Mitochondrion</keyword>
<keyword id="KW-0999">Mitochondrion inner membrane</keyword>
<keyword id="KW-0679">Respiratory chain</keyword>
<keyword id="KW-0812">Transmembrane</keyword>
<keyword id="KW-1133">Transmembrane helix</keyword>
<keyword id="KW-0813">Transport</keyword>
<keyword id="KW-0830">Ubiquinone</keyword>
<organism>
    <name type="scientific">Pygoscelis papua</name>
    <name type="common">Gentoo penguin</name>
    <dbReference type="NCBI Taxonomy" id="30457"/>
    <lineage>
        <taxon>Eukaryota</taxon>
        <taxon>Metazoa</taxon>
        <taxon>Chordata</taxon>
        <taxon>Craniata</taxon>
        <taxon>Vertebrata</taxon>
        <taxon>Euteleostomi</taxon>
        <taxon>Archelosauria</taxon>
        <taxon>Archosauria</taxon>
        <taxon>Dinosauria</taxon>
        <taxon>Saurischia</taxon>
        <taxon>Theropoda</taxon>
        <taxon>Coelurosauria</taxon>
        <taxon>Aves</taxon>
        <taxon>Neognathae</taxon>
        <taxon>Neoaves</taxon>
        <taxon>Aequornithes</taxon>
        <taxon>Sphenisciformes</taxon>
        <taxon>Spheniscidae</taxon>
        <taxon>Pygoscelis</taxon>
    </lineage>
</organism>
<comment type="function">
    <text evidence="2">Component of the ubiquinol-cytochrome c reductase complex (complex III or cytochrome b-c1 complex) that is part of the mitochondrial respiratory chain. The b-c1 complex mediates electron transfer from ubiquinol to cytochrome c. Contributes to the generation of a proton gradient across the mitochondrial membrane that is then used for ATP synthesis.</text>
</comment>
<comment type="cofactor">
    <cofactor evidence="2">
        <name>heme b</name>
        <dbReference type="ChEBI" id="CHEBI:60344"/>
    </cofactor>
    <text evidence="2">Binds 2 heme b groups non-covalently.</text>
</comment>
<comment type="subunit">
    <text evidence="2">The cytochrome bc1 complex contains 11 subunits: 3 respiratory subunits (MT-CYB, CYC1 and UQCRFS1), 2 core proteins (UQCRC1 and UQCRC2) and 6 low-molecular weight proteins (UQCRH/QCR6, UQCRB/QCR7, UQCRQ/QCR8, UQCR10/QCR9, UQCR11/QCR10 and a cleavage product of UQCRFS1). This cytochrome bc1 complex then forms a dimer.</text>
</comment>
<comment type="subcellular location">
    <subcellularLocation>
        <location evidence="2">Mitochondrion inner membrane</location>
        <topology evidence="2">Multi-pass membrane protein</topology>
    </subcellularLocation>
</comment>
<comment type="miscellaneous">
    <text evidence="1">Heme 1 (or BL or b562) is low-potential and absorbs at about 562 nm, and heme 2 (or BH or b566) is high-potential and absorbs at about 566 nm.</text>
</comment>
<comment type="similarity">
    <text evidence="3 4">Belongs to the cytochrome b family.</text>
</comment>
<comment type="caution">
    <text evidence="2">The full-length protein contains only eight transmembrane helices, not nine as predicted by bioinformatics tools.</text>
</comment>
<feature type="chain" id="PRO_0000061475" description="Cytochrome b">
    <location>
        <begin position="1"/>
        <end position="380"/>
    </location>
</feature>
<feature type="transmembrane region" description="Helical" evidence="2">
    <location>
        <begin position="34"/>
        <end position="54"/>
    </location>
</feature>
<feature type="transmembrane region" description="Helical" evidence="2">
    <location>
        <begin position="78"/>
        <end position="99"/>
    </location>
</feature>
<feature type="transmembrane region" description="Helical" evidence="2">
    <location>
        <begin position="114"/>
        <end position="134"/>
    </location>
</feature>
<feature type="transmembrane region" description="Helical" evidence="2">
    <location>
        <begin position="179"/>
        <end position="199"/>
    </location>
</feature>
<feature type="transmembrane region" description="Helical" evidence="2">
    <location>
        <begin position="227"/>
        <end position="247"/>
    </location>
</feature>
<feature type="transmembrane region" description="Helical" evidence="2">
    <location>
        <begin position="289"/>
        <end position="309"/>
    </location>
</feature>
<feature type="transmembrane region" description="Helical" evidence="2">
    <location>
        <begin position="321"/>
        <end position="341"/>
    </location>
</feature>
<feature type="transmembrane region" description="Helical" evidence="2">
    <location>
        <begin position="348"/>
        <end position="368"/>
    </location>
</feature>
<feature type="binding site" description="axial binding residue" evidence="2">
    <location>
        <position position="84"/>
    </location>
    <ligand>
        <name>heme b</name>
        <dbReference type="ChEBI" id="CHEBI:60344"/>
        <label>b562</label>
    </ligand>
    <ligandPart>
        <name>Fe</name>
        <dbReference type="ChEBI" id="CHEBI:18248"/>
    </ligandPart>
</feature>
<feature type="binding site" description="axial binding residue" evidence="2">
    <location>
        <position position="98"/>
    </location>
    <ligand>
        <name>heme b</name>
        <dbReference type="ChEBI" id="CHEBI:60344"/>
        <label>b566</label>
    </ligand>
    <ligandPart>
        <name>Fe</name>
        <dbReference type="ChEBI" id="CHEBI:18248"/>
    </ligandPart>
</feature>
<feature type="binding site" description="axial binding residue" evidence="2">
    <location>
        <position position="183"/>
    </location>
    <ligand>
        <name>heme b</name>
        <dbReference type="ChEBI" id="CHEBI:60344"/>
        <label>b562</label>
    </ligand>
    <ligandPart>
        <name>Fe</name>
        <dbReference type="ChEBI" id="CHEBI:18248"/>
    </ligandPart>
</feature>
<feature type="binding site" description="axial binding residue" evidence="2">
    <location>
        <position position="197"/>
    </location>
    <ligand>
        <name>heme b</name>
        <dbReference type="ChEBI" id="CHEBI:60344"/>
        <label>b566</label>
    </ligand>
    <ligandPart>
        <name>Fe</name>
        <dbReference type="ChEBI" id="CHEBI:18248"/>
    </ligandPart>
</feature>
<feature type="binding site" evidence="2">
    <location>
        <position position="202"/>
    </location>
    <ligand>
        <name>a ubiquinone</name>
        <dbReference type="ChEBI" id="CHEBI:16389"/>
    </ligand>
</feature>
<sequence length="380" mass="42596">MAPNLRKSHPLLKMINKSLIDLPTPPNISAWWNFGSLLGICLITQILTGLLLAMHYTADTTLAFSSIAHTCRNVQYGWLIRNLHANGASFFFICIYFHIGRGLYYGSYLYKETWNTGIILLLTLMATAFVGYVLPWGQMSFWGATVITNLFSAIPYVGQTLVEWAWGGFSVDNPTLTRFFALHFLLPFMITGLTLIHLTFLHESGSNNPLGIVANSDKIPFHPYYSTKDILGFALMLLPLTTLALFSPNLLGDPENFTPANPLVTPPHIKPEWYFLFAYAILRSIPNKLGGVLALAASVLILFLSPLLHKSKQRTMAFRPLSQLLFWTLVANLLILTWIGSQPVEHPFIIIGQLASTTYFIILLILFPITSALENKMLNF</sequence>
<proteinExistence type="inferred from homology"/>
<protein>
    <recommendedName>
        <fullName>Cytochrome b</fullName>
    </recommendedName>
    <alternativeName>
        <fullName>Complex III subunit 3</fullName>
    </alternativeName>
    <alternativeName>
        <fullName>Complex III subunit III</fullName>
    </alternativeName>
    <alternativeName>
        <fullName>Cytochrome b-c1 complex subunit 3</fullName>
    </alternativeName>
    <alternativeName>
        <fullName>Ubiquinol-cytochrome-c reductase complex cytochrome b subunit</fullName>
    </alternativeName>
</protein>
<accession>O79228</accession>